<protein>
    <recommendedName>
        <fullName evidence="1">Proline--tRNA ligase</fullName>
        <ecNumber evidence="1">6.1.1.15</ecNumber>
    </recommendedName>
    <alternativeName>
        <fullName evidence="1">Prolyl-tRNA synthetase</fullName>
        <shortName evidence="1">ProRS</shortName>
    </alternativeName>
</protein>
<comment type="function">
    <text evidence="1">Catalyzes the attachment of proline to tRNA(Pro) in a two-step reaction: proline is first activated by ATP to form Pro-AMP and then transferred to the acceptor end of tRNA(Pro).</text>
</comment>
<comment type="catalytic activity">
    <reaction evidence="1">
        <text>tRNA(Pro) + L-proline + ATP = L-prolyl-tRNA(Pro) + AMP + diphosphate</text>
        <dbReference type="Rhea" id="RHEA:14305"/>
        <dbReference type="Rhea" id="RHEA-COMP:9700"/>
        <dbReference type="Rhea" id="RHEA-COMP:9702"/>
        <dbReference type="ChEBI" id="CHEBI:30616"/>
        <dbReference type="ChEBI" id="CHEBI:33019"/>
        <dbReference type="ChEBI" id="CHEBI:60039"/>
        <dbReference type="ChEBI" id="CHEBI:78442"/>
        <dbReference type="ChEBI" id="CHEBI:78532"/>
        <dbReference type="ChEBI" id="CHEBI:456215"/>
        <dbReference type="EC" id="6.1.1.15"/>
    </reaction>
</comment>
<comment type="subunit">
    <text evidence="1">Homodimer.</text>
</comment>
<comment type="subcellular location">
    <subcellularLocation>
        <location evidence="1">Cytoplasm</location>
    </subcellularLocation>
</comment>
<comment type="similarity">
    <text evidence="1">Belongs to the class-II aminoacyl-tRNA synthetase family. ProS type 2 subfamily.</text>
</comment>
<proteinExistence type="inferred from homology"/>
<dbReference type="EC" id="6.1.1.15" evidence="1"/>
<dbReference type="EMBL" id="BX897700">
    <property type="protein sequence ID" value="CAF26072.1"/>
    <property type="molecule type" value="Genomic_DNA"/>
</dbReference>
<dbReference type="RefSeq" id="WP_011179342.1">
    <property type="nucleotide sequence ID" value="NC_005955.1"/>
</dbReference>
<dbReference type="SMR" id="Q6FZX5"/>
<dbReference type="GeneID" id="56533056"/>
<dbReference type="KEGG" id="bqu:BQ05800"/>
<dbReference type="eggNOG" id="COG0442">
    <property type="taxonomic scope" value="Bacteria"/>
</dbReference>
<dbReference type="HOGENOM" id="CLU_016739_4_2_5"/>
<dbReference type="OrthoDB" id="9809052at2"/>
<dbReference type="Proteomes" id="UP000000597">
    <property type="component" value="Chromosome"/>
</dbReference>
<dbReference type="GO" id="GO:0005829">
    <property type="term" value="C:cytosol"/>
    <property type="evidence" value="ECO:0007669"/>
    <property type="project" value="TreeGrafter"/>
</dbReference>
<dbReference type="GO" id="GO:0005524">
    <property type="term" value="F:ATP binding"/>
    <property type="evidence" value="ECO:0007669"/>
    <property type="project" value="UniProtKB-UniRule"/>
</dbReference>
<dbReference type="GO" id="GO:0004827">
    <property type="term" value="F:proline-tRNA ligase activity"/>
    <property type="evidence" value="ECO:0007669"/>
    <property type="project" value="UniProtKB-UniRule"/>
</dbReference>
<dbReference type="GO" id="GO:0006433">
    <property type="term" value="P:prolyl-tRNA aminoacylation"/>
    <property type="evidence" value="ECO:0007669"/>
    <property type="project" value="UniProtKB-UniRule"/>
</dbReference>
<dbReference type="CDD" id="cd00861">
    <property type="entry name" value="ProRS_anticodon_short"/>
    <property type="match status" value="1"/>
</dbReference>
<dbReference type="CDD" id="cd00779">
    <property type="entry name" value="ProRS_core_prok"/>
    <property type="match status" value="1"/>
</dbReference>
<dbReference type="FunFam" id="3.30.930.10:FF:000042">
    <property type="entry name" value="probable proline--tRNA ligase, mitochondrial"/>
    <property type="match status" value="1"/>
</dbReference>
<dbReference type="FunFam" id="3.40.50.800:FF:000032">
    <property type="entry name" value="Proline--tRNA ligase"/>
    <property type="match status" value="1"/>
</dbReference>
<dbReference type="Gene3D" id="3.40.50.800">
    <property type="entry name" value="Anticodon-binding domain"/>
    <property type="match status" value="1"/>
</dbReference>
<dbReference type="Gene3D" id="3.30.930.10">
    <property type="entry name" value="Bira Bifunctional Protein, Domain 2"/>
    <property type="match status" value="1"/>
</dbReference>
<dbReference type="HAMAP" id="MF_01570">
    <property type="entry name" value="Pro_tRNA_synth_type2"/>
    <property type="match status" value="1"/>
</dbReference>
<dbReference type="InterPro" id="IPR002314">
    <property type="entry name" value="aa-tRNA-synt_IIb"/>
</dbReference>
<dbReference type="InterPro" id="IPR006195">
    <property type="entry name" value="aa-tRNA-synth_II"/>
</dbReference>
<dbReference type="InterPro" id="IPR045864">
    <property type="entry name" value="aa-tRNA-synth_II/BPL/LPL"/>
</dbReference>
<dbReference type="InterPro" id="IPR004154">
    <property type="entry name" value="Anticodon-bd"/>
</dbReference>
<dbReference type="InterPro" id="IPR036621">
    <property type="entry name" value="Anticodon-bd_dom_sf"/>
</dbReference>
<dbReference type="InterPro" id="IPR002316">
    <property type="entry name" value="Pro-tRNA-ligase_IIa"/>
</dbReference>
<dbReference type="InterPro" id="IPR004500">
    <property type="entry name" value="Pro-tRNA-synth_IIa_bac-type"/>
</dbReference>
<dbReference type="InterPro" id="IPR050062">
    <property type="entry name" value="Pro-tRNA_synthetase"/>
</dbReference>
<dbReference type="InterPro" id="IPR023716">
    <property type="entry name" value="Prolyl-tRNA_ligase_IIa_type2"/>
</dbReference>
<dbReference type="InterPro" id="IPR044140">
    <property type="entry name" value="ProRS_anticodon_short"/>
</dbReference>
<dbReference type="InterPro" id="IPR033730">
    <property type="entry name" value="ProRS_core_prok"/>
</dbReference>
<dbReference type="NCBIfam" id="NF008979">
    <property type="entry name" value="PRK12325.1"/>
    <property type="match status" value="1"/>
</dbReference>
<dbReference type="NCBIfam" id="TIGR00409">
    <property type="entry name" value="proS_fam_II"/>
    <property type="match status" value="1"/>
</dbReference>
<dbReference type="PANTHER" id="PTHR42753">
    <property type="entry name" value="MITOCHONDRIAL RIBOSOME PROTEIN L39/PROLYL-TRNA LIGASE FAMILY MEMBER"/>
    <property type="match status" value="1"/>
</dbReference>
<dbReference type="PANTHER" id="PTHR42753:SF2">
    <property type="entry name" value="PROLINE--TRNA LIGASE"/>
    <property type="match status" value="1"/>
</dbReference>
<dbReference type="Pfam" id="PF03129">
    <property type="entry name" value="HGTP_anticodon"/>
    <property type="match status" value="1"/>
</dbReference>
<dbReference type="Pfam" id="PF00587">
    <property type="entry name" value="tRNA-synt_2b"/>
    <property type="match status" value="1"/>
</dbReference>
<dbReference type="PRINTS" id="PR01046">
    <property type="entry name" value="TRNASYNTHPRO"/>
</dbReference>
<dbReference type="SUPFAM" id="SSF52954">
    <property type="entry name" value="Class II aaRS ABD-related"/>
    <property type="match status" value="1"/>
</dbReference>
<dbReference type="SUPFAM" id="SSF55681">
    <property type="entry name" value="Class II aaRS and biotin synthetases"/>
    <property type="match status" value="1"/>
</dbReference>
<dbReference type="PROSITE" id="PS50862">
    <property type="entry name" value="AA_TRNA_LIGASE_II"/>
    <property type="match status" value="1"/>
</dbReference>
<gene>
    <name evidence="1" type="primary">proS</name>
    <name type="ordered locus">BQ05800</name>
</gene>
<evidence type="ECO:0000255" key="1">
    <source>
        <dbReference type="HAMAP-Rule" id="MF_01570"/>
    </source>
</evidence>
<sequence>MRLSQYFLPLLKENPKEAEIISHRLMLRAGMIRQQTSGIYSWLPLGKKVLDKVCKIIREEQERAGAVEILMPTVQSADLWRESGRYDDYGLEMLRIKDRQKRDLLYGPTNEEMVTDIFRSYVHSYKDLPLNLYHIQWKFRDEIRPRFGVMRSREFLMKDAYSFDLDYEGSKTSYNRMFVAYLRTFSCLGLKAIPMRADTGPIGGELSHEFIILAETGESAIFCDKKFFELTVPHSSIDFSDKAVLANIVKQWTSFYAATEEMHNEEEWAKVSDNDRLSARGIEVGHIFHFGTKYSAPMGAKVMGQDGKEHLVSMGSYGIGPSRLVAAVIEASHDENGIIWPKSIAPFDFGIINMKPNDEKCTRACETLYSGLMQAGFDPLLDDRNERPGSKFATMDLIGLPTQIIVGPKSIAQNEVEIKDRKTGVKKSLTVENVLNQFFRI</sequence>
<name>SYP_BARQU</name>
<accession>Q6FZX5</accession>
<reference key="1">
    <citation type="journal article" date="2004" name="Proc. Natl. Acad. Sci. U.S.A.">
        <title>The louse-borne human pathogen Bartonella quintana is a genomic derivative of the zoonotic agent Bartonella henselae.</title>
        <authorList>
            <person name="Alsmark U.C.M."/>
            <person name="Frank A.C."/>
            <person name="Karlberg E.O."/>
            <person name="Legault B.-A."/>
            <person name="Ardell D.H."/>
            <person name="Canbaeck B."/>
            <person name="Eriksson A.-S."/>
            <person name="Naeslund A.K."/>
            <person name="Handley S.A."/>
            <person name="Huvet M."/>
            <person name="La Scola B."/>
            <person name="Holmberg M."/>
            <person name="Andersson S.G.E."/>
        </authorList>
    </citation>
    <scope>NUCLEOTIDE SEQUENCE [LARGE SCALE GENOMIC DNA]</scope>
    <source>
        <strain>Toulouse</strain>
    </source>
</reference>
<feature type="chain" id="PRO_0000248890" description="Proline--tRNA ligase">
    <location>
        <begin position="1"/>
        <end position="441"/>
    </location>
</feature>
<keyword id="KW-0030">Aminoacyl-tRNA synthetase</keyword>
<keyword id="KW-0067">ATP-binding</keyword>
<keyword id="KW-0963">Cytoplasm</keyword>
<keyword id="KW-0436">Ligase</keyword>
<keyword id="KW-0547">Nucleotide-binding</keyword>
<keyword id="KW-0648">Protein biosynthesis</keyword>
<organism>
    <name type="scientific">Bartonella quintana (strain Toulouse)</name>
    <name type="common">Rochalimaea quintana</name>
    <dbReference type="NCBI Taxonomy" id="283165"/>
    <lineage>
        <taxon>Bacteria</taxon>
        <taxon>Pseudomonadati</taxon>
        <taxon>Pseudomonadota</taxon>
        <taxon>Alphaproteobacteria</taxon>
        <taxon>Hyphomicrobiales</taxon>
        <taxon>Bartonellaceae</taxon>
        <taxon>Bartonella</taxon>
    </lineage>
</organism>